<gene>
    <name type="primary">tbp</name>
    <name type="ordered locus">PH1009</name>
</gene>
<evidence type="ECO:0000250" key="1"/>
<evidence type="ECO:0000305" key="2"/>
<accession>O58737</accession>
<proteinExistence type="inferred from homology"/>
<name>TBP_PYRHO</name>
<protein>
    <recommendedName>
        <fullName>TATA-box-binding protein</fullName>
    </recommendedName>
    <alternativeName>
        <fullName>Box A-binding protein</fullName>
        <shortName>BAP</shortName>
    </alternativeName>
    <alternativeName>
        <fullName>TATA sequence-binding protein</fullName>
        <shortName>TBP</shortName>
    </alternativeName>
    <alternativeName>
        <fullName>TATA-box factor</fullName>
    </alternativeName>
</protein>
<keyword id="KW-0238">DNA-binding</keyword>
<keyword id="KW-0677">Repeat</keyword>
<keyword id="KW-0804">Transcription</keyword>
<keyword id="KW-0805">Transcription regulation</keyword>
<reference key="1">
    <citation type="journal article" date="1998" name="DNA Res.">
        <title>Complete sequence and gene organization of the genome of a hyper-thermophilic archaebacterium, Pyrococcus horikoshii OT3.</title>
        <authorList>
            <person name="Kawarabayasi Y."/>
            <person name="Sawada M."/>
            <person name="Horikawa H."/>
            <person name="Haikawa Y."/>
            <person name="Hino Y."/>
            <person name="Yamamoto S."/>
            <person name="Sekine M."/>
            <person name="Baba S."/>
            <person name="Kosugi H."/>
            <person name="Hosoyama A."/>
            <person name="Nagai Y."/>
            <person name="Sakai M."/>
            <person name="Ogura K."/>
            <person name="Otsuka R."/>
            <person name="Nakazawa H."/>
            <person name="Takamiya M."/>
            <person name="Ohfuku Y."/>
            <person name="Funahashi T."/>
            <person name="Tanaka T."/>
            <person name="Kudoh Y."/>
            <person name="Yamazaki J."/>
            <person name="Kushida N."/>
            <person name="Oguchi A."/>
            <person name="Aoki K."/>
            <person name="Yoshizawa T."/>
            <person name="Nakamura Y."/>
            <person name="Robb F.T."/>
            <person name="Horikoshi K."/>
            <person name="Masuchi Y."/>
            <person name="Shizuya H."/>
            <person name="Kikuchi H."/>
        </authorList>
    </citation>
    <scope>NUCLEOTIDE SEQUENCE [LARGE SCALE GENOMIC DNA]</scope>
    <source>
        <strain>ATCC 700860 / DSM 12428 / JCM 9974 / NBRC 100139 / OT-3</strain>
    </source>
</reference>
<comment type="function">
    <text evidence="1">General factor that plays a role in the activation of archaeal genes transcribed by RNA polymerase. Binds specifically to the TATA box promoter element which lies close to the position of transcription initiation (By similarity).</text>
</comment>
<comment type="similarity">
    <text evidence="2">Belongs to the TBP family.</text>
</comment>
<sequence>MVDTSNVKLRIENIVASVDLFAQLDLEKVLDICPNSKYNPEEFPGIICRFDDPKVALLIFSSGKLVVTGAKSIQDIERAVAKLIQKLKGIGVKFKRAPLIDVQNMVFSGDIGREFNLDNVALTLPNCEYEPEQFPGVIYRVKEPRAVILLFSSGKIVCSGAKSEADAWEAVRKLLRELEKYGLIEEEEEEL</sequence>
<dbReference type="EMBL" id="BA000001">
    <property type="protein sequence ID" value="BAA30106.1"/>
    <property type="molecule type" value="Genomic_DNA"/>
</dbReference>
<dbReference type="PIR" id="D71093">
    <property type="entry name" value="D71093"/>
</dbReference>
<dbReference type="RefSeq" id="WP_010885095.1">
    <property type="nucleotide sequence ID" value="NC_000961.1"/>
</dbReference>
<dbReference type="SMR" id="O58737"/>
<dbReference type="STRING" id="70601.gene:9377966"/>
<dbReference type="EnsemblBacteria" id="BAA30106">
    <property type="protein sequence ID" value="BAA30106"/>
    <property type="gene ID" value="BAA30106"/>
</dbReference>
<dbReference type="GeneID" id="1443330"/>
<dbReference type="KEGG" id="pho:PH1009"/>
<dbReference type="eggNOG" id="arCOG01764">
    <property type="taxonomic scope" value="Archaea"/>
</dbReference>
<dbReference type="OrthoDB" id="350539at2157"/>
<dbReference type="Proteomes" id="UP000000752">
    <property type="component" value="Chromosome"/>
</dbReference>
<dbReference type="GO" id="GO:0003677">
    <property type="term" value="F:DNA binding"/>
    <property type="evidence" value="ECO:0007669"/>
    <property type="project" value="UniProtKB-KW"/>
</dbReference>
<dbReference type="GO" id="GO:0003700">
    <property type="term" value="F:DNA-binding transcription factor activity"/>
    <property type="evidence" value="ECO:0007669"/>
    <property type="project" value="UniProtKB-UniRule"/>
</dbReference>
<dbReference type="GO" id="GO:0006352">
    <property type="term" value="P:DNA-templated transcription initiation"/>
    <property type="evidence" value="ECO:0007669"/>
    <property type="project" value="InterPro"/>
</dbReference>
<dbReference type="CDD" id="cd04518">
    <property type="entry name" value="TBP_archaea"/>
    <property type="match status" value="1"/>
</dbReference>
<dbReference type="FunFam" id="3.30.310.10:FF:000007">
    <property type="entry name" value="TATA-box-binding protein"/>
    <property type="match status" value="1"/>
</dbReference>
<dbReference type="FunFam" id="3.30.310.10:FF:000010">
    <property type="entry name" value="TATA-box-binding protein"/>
    <property type="match status" value="1"/>
</dbReference>
<dbReference type="Gene3D" id="3.30.310.10">
    <property type="entry name" value="TATA-Binding Protein"/>
    <property type="match status" value="2"/>
</dbReference>
<dbReference type="HAMAP" id="MF_00408">
    <property type="entry name" value="TATA_bind_prot_arch"/>
    <property type="match status" value="1"/>
</dbReference>
<dbReference type="InterPro" id="IPR000814">
    <property type="entry name" value="TBP"/>
</dbReference>
<dbReference type="InterPro" id="IPR033711">
    <property type="entry name" value="TBP_archaea"/>
</dbReference>
<dbReference type="InterPro" id="IPR030491">
    <property type="entry name" value="TBP_CS"/>
</dbReference>
<dbReference type="InterPro" id="IPR012295">
    <property type="entry name" value="TBP_dom_sf"/>
</dbReference>
<dbReference type="NCBIfam" id="NF001593">
    <property type="entry name" value="PRK00394.1-2"/>
    <property type="match status" value="1"/>
</dbReference>
<dbReference type="NCBIfam" id="NF001594">
    <property type="entry name" value="PRK00394.1-3"/>
    <property type="match status" value="1"/>
</dbReference>
<dbReference type="PANTHER" id="PTHR10126">
    <property type="entry name" value="TATA-BOX BINDING PROTEIN"/>
    <property type="match status" value="1"/>
</dbReference>
<dbReference type="Pfam" id="PF00352">
    <property type="entry name" value="TBP"/>
    <property type="match status" value="2"/>
</dbReference>
<dbReference type="PRINTS" id="PR00686">
    <property type="entry name" value="TIFACTORIID"/>
</dbReference>
<dbReference type="SUPFAM" id="SSF55945">
    <property type="entry name" value="TATA-box binding protein-like"/>
    <property type="match status" value="2"/>
</dbReference>
<dbReference type="PROSITE" id="PS00351">
    <property type="entry name" value="TFIID"/>
    <property type="match status" value="2"/>
</dbReference>
<organism>
    <name type="scientific">Pyrococcus horikoshii (strain ATCC 700860 / DSM 12428 / JCM 9974 / NBRC 100139 / OT-3)</name>
    <dbReference type="NCBI Taxonomy" id="70601"/>
    <lineage>
        <taxon>Archaea</taxon>
        <taxon>Methanobacteriati</taxon>
        <taxon>Methanobacteriota</taxon>
        <taxon>Thermococci</taxon>
        <taxon>Thermococcales</taxon>
        <taxon>Thermococcaceae</taxon>
        <taxon>Pyrococcus</taxon>
    </lineage>
</organism>
<feature type="chain" id="PRO_0000154020" description="TATA-box-binding protein">
    <location>
        <begin position="1"/>
        <end position="191"/>
    </location>
</feature>
<feature type="repeat" description="1">
    <location>
        <begin position="11"/>
        <end position="87"/>
    </location>
</feature>
<feature type="repeat" description="2">
    <location>
        <begin position="102"/>
        <end position="178"/>
    </location>
</feature>